<feature type="chain" id="PRO_0000173270" description="Large ribosomal subunit protein bL31B">
    <location>
        <begin position="1"/>
        <end position="80"/>
    </location>
</feature>
<protein>
    <recommendedName>
        <fullName evidence="1">Large ribosomal subunit protein bL31B</fullName>
    </recommendedName>
    <alternativeName>
        <fullName evidence="2">50S ribosomal protein L31 type B</fullName>
    </alternativeName>
</protein>
<name>RL31B_STRPN</name>
<proteinExistence type="inferred from homology"/>
<comment type="subunit">
    <text evidence="1">Part of the 50S ribosomal subunit.</text>
</comment>
<comment type="similarity">
    <text evidence="1">Belongs to the bacterial ribosomal protein bL31 family. Type B subfamily.</text>
</comment>
<dbReference type="EMBL" id="AE005672">
    <property type="protein sequence ID" value="AAK75403.1"/>
    <property type="molecule type" value="Genomic_DNA"/>
</dbReference>
<dbReference type="PIR" id="B95151">
    <property type="entry name" value="B95151"/>
</dbReference>
<dbReference type="RefSeq" id="WP_000710764.1">
    <property type="nucleotide sequence ID" value="NZ_CP155539.1"/>
</dbReference>
<dbReference type="SMR" id="P66200"/>
<dbReference type="PaxDb" id="170187-SP_1299"/>
<dbReference type="EnsemblBacteria" id="AAK75403">
    <property type="protein sequence ID" value="AAK75403"/>
    <property type="gene ID" value="SP_1299"/>
</dbReference>
<dbReference type="KEGG" id="spn:SP_1299"/>
<dbReference type="eggNOG" id="COG0254">
    <property type="taxonomic scope" value="Bacteria"/>
</dbReference>
<dbReference type="PhylomeDB" id="P66200"/>
<dbReference type="BioCyc" id="SPNE170187:G1FZB-1313-MONOMER"/>
<dbReference type="Proteomes" id="UP000000585">
    <property type="component" value="Chromosome"/>
</dbReference>
<dbReference type="GO" id="GO:1990904">
    <property type="term" value="C:ribonucleoprotein complex"/>
    <property type="evidence" value="ECO:0007669"/>
    <property type="project" value="UniProtKB-KW"/>
</dbReference>
<dbReference type="GO" id="GO:0005840">
    <property type="term" value="C:ribosome"/>
    <property type="evidence" value="ECO:0007669"/>
    <property type="project" value="UniProtKB-KW"/>
</dbReference>
<dbReference type="GO" id="GO:0003735">
    <property type="term" value="F:structural constituent of ribosome"/>
    <property type="evidence" value="ECO:0007669"/>
    <property type="project" value="InterPro"/>
</dbReference>
<dbReference type="GO" id="GO:0006412">
    <property type="term" value="P:translation"/>
    <property type="evidence" value="ECO:0007669"/>
    <property type="project" value="UniProtKB-UniRule"/>
</dbReference>
<dbReference type="Gene3D" id="4.10.830.30">
    <property type="entry name" value="Ribosomal protein L31"/>
    <property type="match status" value="1"/>
</dbReference>
<dbReference type="HAMAP" id="MF_00502">
    <property type="entry name" value="Ribosomal_bL31_2"/>
    <property type="match status" value="1"/>
</dbReference>
<dbReference type="InterPro" id="IPR034704">
    <property type="entry name" value="Ribosomal_bL28/bL31-like_sf"/>
</dbReference>
<dbReference type="InterPro" id="IPR002150">
    <property type="entry name" value="Ribosomal_bL31"/>
</dbReference>
<dbReference type="InterPro" id="IPR027493">
    <property type="entry name" value="Ribosomal_bL31_B"/>
</dbReference>
<dbReference type="InterPro" id="IPR042105">
    <property type="entry name" value="Ribosomal_bL31_sf"/>
</dbReference>
<dbReference type="NCBIfam" id="TIGR00105">
    <property type="entry name" value="L31"/>
    <property type="match status" value="1"/>
</dbReference>
<dbReference type="NCBIfam" id="NF002462">
    <property type="entry name" value="PRK01678.1"/>
    <property type="match status" value="1"/>
</dbReference>
<dbReference type="PANTHER" id="PTHR33280">
    <property type="entry name" value="50S RIBOSOMAL PROTEIN L31, CHLOROPLASTIC"/>
    <property type="match status" value="1"/>
</dbReference>
<dbReference type="PANTHER" id="PTHR33280:SF1">
    <property type="entry name" value="LARGE RIBOSOMAL SUBUNIT PROTEIN BL31C"/>
    <property type="match status" value="1"/>
</dbReference>
<dbReference type="Pfam" id="PF01197">
    <property type="entry name" value="Ribosomal_L31"/>
    <property type="match status" value="1"/>
</dbReference>
<dbReference type="PRINTS" id="PR01249">
    <property type="entry name" value="RIBOSOMALL31"/>
</dbReference>
<dbReference type="SUPFAM" id="SSF143800">
    <property type="entry name" value="L28p-like"/>
    <property type="match status" value="1"/>
</dbReference>
<dbReference type="PROSITE" id="PS01143">
    <property type="entry name" value="RIBOSOMAL_L31"/>
    <property type="match status" value="1"/>
</dbReference>
<keyword id="KW-1185">Reference proteome</keyword>
<keyword id="KW-0687">Ribonucleoprotein</keyword>
<keyword id="KW-0689">Ribosomal protein</keyword>
<reference key="1">
    <citation type="journal article" date="2001" name="Science">
        <title>Complete genome sequence of a virulent isolate of Streptococcus pneumoniae.</title>
        <authorList>
            <person name="Tettelin H."/>
            <person name="Nelson K.E."/>
            <person name="Paulsen I.T."/>
            <person name="Eisen J.A."/>
            <person name="Read T.D."/>
            <person name="Peterson S.N."/>
            <person name="Heidelberg J.F."/>
            <person name="DeBoy R.T."/>
            <person name="Haft D.H."/>
            <person name="Dodson R.J."/>
            <person name="Durkin A.S."/>
            <person name="Gwinn M.L."/>
            <person name="Kolonay J.F."/>
            <person name="Nelson W.C."/>
            <person name="Peterson J.D."/>
            <person name="Umayam L.A."/>
            <person name="White O."/>
            <person name="Salzberg S.L."/>
            <person name="Lewis M.R."/>
            <person name="Radune D."/>
            <person name="Holtzapple E.K."/>
            <person name="Khouri H.M."/>
            <person name="Wolf A.M."/>
            <person name="Utterback T.R."/>
            <person name="Hansen C.L."/>
            <person name="McDonald L.A."/>
            <person name="Feldblyum T.V."/>
            <person name="Angiuoli S.V."/>
            <person name="Dickinson T."/>
            <person name="Hickey E.K."/>
            <person name="Holt I.E."/>
            <person name="Loftus B.J."/>
            <person name="Yang F."/>
            <person name="Smith H.O."/>
            <person name="Venter J.C."/>
            <person name="Dougherty B.A."/>
            <person name="Morrison D.A."/>
            <person name="Hollingshead S.K."/>
            <person name="Fraser C.M."/>
        </authorList>
    </citation>
    <scope>NUCLEOTIDE SEQUENCE [LARGE SCALE GENOMIC DNA]</scope>
    <source>
        <strain>ATCC BAA-334 / TIGR4</strain>
    </source>
</reference>
<organism>
    <name type="scientific">Streptococcus pneumoniae serotype 4 (strain ATCC BAA-334 / TIGR4)</name>
    <dbReference type="NCBI Taxonomy" id="170187"/>
    <lineage>
        <taxon>Bacteria</taxon>
        <taxon>Bacillati</taxon>
        <taxon>Bacillota</taxon>
        <taxon>Bacilli</taxon>
        <taxon>Lactobacillales</taxon>
        <taxon>Streptococcaceae</taxon>
        <taxon>Streptococcus</taxon>
    </lineage>
</organism>
<sequence>MKKDIHPEYRPVVFMDTTTGYQFLSGSTKRSNETVEFEGETYPLIRVEISSDSHPFYTGRQKFTQADGRVDRFNKKYGLK</sequence>
<accession>P66200</accession>
<accession>Q97QC0</accession>
<gene>
    <name evidence="1" type="primary">rpmE2</name>
    <name type="synonym">rpmE</name>
    <name type="ordered locus">SP_1299</name>
</gene>
<evidence type="ECO:0000255" key="1">
    <source>
        <dbReference type="HAMAP-Rule" id="MF_00502"/>
    </source>
</evidence>
<evidence type="ECO:0000305" key="2"/>